<accession>B5RCG1</accession>
<organism>
    <name type="scientific">Salmonella gallinarum (strain 287/91 / NCTC 13346)</name>
    <dbReference type="NCBI Taxonomy" id="550538"/>
    <lineage>
        <taxon>Bacteria</taxon>
        <taxon>Pseudomonadati</taxon>
        <taxon>Pseudomonadota</taxon>
        <taxon>Gammaproteobacteria</taxon>
        <taxon>Enterobacterales</taxon>
        <taxon>Enterobacteriaceae</taxon>
        <taxon>Salmonella</taxon>
    </lineage>
</organism>
<name>YFBV_SALG2</name>
<dbReference type="EMBL" id="AM933173">
    <property type="protein sequence ID" value="CAR38195.1"/>
    <property type="molecule type" value="Genomic_DNA"/>
</dbReference>
<dbReference type="RefSeq" id="WP_000106617.1">
    <property type="nucleotide sequence ID" value="NC_011274.1"/>
</dbReference>
<dbReference type="KEGG" id="seg:SG2365"/>
<dbReference type="HOGENOM" id="CLU_128746_0_0_6"/>
<dbReference type="Proteomes" id="UP000008321">
    <property type="component" value="Chromosome"/>
</dbReference>
<dbReference type="GO" id="GO:0005886">
    <property type="term" value="C:plasma membrane"/>
    <property type="evidence" value="ECO:0007669"/>
    <property type="project" value="UniProtKB-SubCell"/>
</dbReference>
<dbReference type="HAMAP" id="MF_01101">
    <property type="entry name" value="UPF0208"/>
    <property type="match status" value="1"/>
</dbReference>
<dbReference type="InterPro" id="IPR007334">
    <property type="entry name" value="UPF0208"/>
</dbReference>
<dbReference type="NCBIfam" id="NF002493">
    <property type="entry name" value="PRK01816.1"/>
    <property type="match status" value="1"/>
</dbReference>
<dbReference type="Pfam" id="PF04217">
    <property type="entry name" value="DUF412"/>
    <property type="match status" value="1"/>
</dbReference>
<keyword id="KW-0997">Cell inner membrane</keyword>
<keyword id="KW-1003">Cell membrane</keyword>
<keyword id="KW-0472">Membrane</keyword>
<keyword id="KW-0812">Transmembrane</keyword>
<keyword id="KW-1133">Transmembrane helix</keyword>
<sequence length="151" mass="17201">MSTPDNRSVNFFSLFRRGQHYAKTWPMEKRLAPVFVENRVIRMTRYAIRFMPPVAVFTLCWQIALGGQLGPAVATALFALSLPMQGLWWLGKRSVTPLPPSILNWFYEVRGKLQEAGQALAPVEGKPDYQALADTLKRAFKQLDKTFLDDL</sequence>
<proteinExistence type="inferred from homology"/>
<feature type="chain" id="PRO_1000136998" description="UPF0208 membrane protein YfbV">
    <location>
        <begin position="1"/>
        <end position="151"/>
    </location>
</feature>
<feature type="transmembrane region" description="Helical" evidence="1">
    <location>
        <begin position="46"/>
        <end position="65"/>
    </location>
</feature>
<feature type="transmembrane region" description="Helical" evidence="1">
    <location>
        <begin position="69"/>
        <end position="91"/>
    </location>
</feature>
<protein>
    <recommendedName>
        <fullName evidence="1">UPF0208 membrane protein YfbV</fullName>
    </recommendedName>
</protein>
<comment type="subcellular location">
    <subcellularLocation>
        <location evidence="1">Cell inner membrane</location>
        <topology evidence="1">Multi-pass membrane protein</topology>
    </subcellularLocation>
</comment>
<comment type="similarity">
    <text evidence="1">Belongs to the UPF0208 family.</text>
</comment>
<gene>
    <name evidence="1" type="primary">yfbV</name>
    <name type="ordered locus">SG2365</name>
</gene>
<evidence type="ECO:0000255" key="1">
    <source>
        <dbReference type="HAMAP-Rule" id="MF_01101"/>
    </source>
</evidence>
<reference key="1">
    <citation type="journal article" date="2008" name="Genome Res.">
        <title>Comparative genome analysis of Salmonella enteritidis PT4 and Salmonella gallinarum 287/91 provides insights into evolutionary and host adaptation pathways.</title>
        <authorList>
            <person name="Thomson N.R."/>
            <person name="Clayton D.J."/>
            <person name="Windhorst D."/>
            <person name="Vernikos G."/>
            <person name="Davidson S."/>
            <person name="Churcher C."/>
            <person name="Quail M.A."/>
            <person name="Stevens M."/>
            <person name="Jones M.A."/>
            <person name="Watson M."/>
            <person name="Barron A."/>
            <person name="Layton A."/>
            <person name="Pickard D."/>
            <person name="Kingsley R.A."/>
            <person name="Bignell A."/>
            <person name="Clark L."/>
            <person name="Harris B."/>
            <person name="Ormond D."/>
            <person name="Abdellah Z."/>
            <person name="Brooks K."/>
            <person name="Cherevach I."/>
            <person name="Chillingworth T."/>
            <person name="Woodward J."/>
            <person name="Norberczak H."/>
            <person name="Lord A."/>
            <person name="Arrowsmith C."/>
            <person name="Jagels K."/>
            <person name="Moule S."/>
            <person name="Mungall K."/>
            <person name="Saunders M."/>
            <person name="Whitehead S."/>
            <person name="Chabalgoity J.A."/>
            <person name="Maskell D."/>
            <person name="Humphreys T."/>
            <person name="Roberts M."/>
            <person name="Barrow P.A."/>
            <person name="Dougan G."/>
            <person name="Parkhill J."/>
        </authorList>
    </citation>
    <scope>NUCLEOTIDE SEQUENCE [LARGE SCALE GENOMIC DNA]</scope>
    <source>
        <strain>287/91 / NCTC 13346</strain>
    </source>
</reference>